<comment type="function">
    <text evidence="1">Receptor for cysteinyl leukotrienes mediating constriction of the microvascular smooth muscle during an inflammatory response. This response is mediated via a G-protein that activates a phosphatidylinositol-calcium second messenger system (By similarity).</text>
</comment>
<comment type="subcellular location">
    <subcellularLocation>
        <location>Cell membrane</location>
        <topology>Multi-pass membrane protein</topology>
    </subcellularLocation>
</comment>
<comment type="similarity">
    <text evidence="3">Belongs to the G-protein coupled receptor 1 family.</text>
</comment>
<name>CLTR1_PIG</name>
<keyword id="KW-1003">Cell membrane</keyword>
<keyword id="KW-1015">Disulfide bond</keyword>
<keyword id="KW-0297">G-protein coupled receptor</keyword>
<keyword id="KW-0325">Glycoprotein</keyword>
<keyword id="KW-0472">Membrane</keyword>
<keyword id="KW-0675">Receptor</keyword>
<keyword id="KW-1185">Reference proteome</keyword>
<keyword id="KW-0807">Transducer</keyword>
<keyword id="KW-0812">Transmembrane</keyword>
<keyword id="KW-1133">Transmembrane helix</keyword>
<proteinExistence type="evidence at transcript level"/>
<dbReference type="EMBL" id="AB052686">
    <property type="protein sequence ID" value="BAB60826.1"/>
    <property type="molecule type" value="mRNA"/>
</dbReference>
<dbReference type="RefSeq" id="NP_999294.1">
    <property type="nucleotide sequence ID" value="NM_214129.1"/>
</dbReference>
<dbReference type="FunCoup" id="Q95N02">
    <property type="interactions" value="151"/>
</dbReference>
<dbReference type="STRING" id="9823.ENSSSCP00000034195"/>
<dbReference type="GlyCosmos" id="Q95N02">
    <property type="glycosylation" value="4 sites, No reported glycans"/>
</dbReference>
<dbReference type="GlyGen" id="Q95N02">
    <property type="glycosylation" value="4 sites"/>
</dbReference>
<dbReference type="PaxDb" id="9823-ENSSSCP00000013241"/>
<dbReference type="GeneID" id="397242"/>
<dbReference type="KEGG" id="ssc:397242"/>
<dbReference type="CTD" id="10800"/>
<dbReference type="eggNOG" id="ENOG502QUJU">
    <property type="taxonomic scope" value="Eukaryota"/>
</dbReference>
<dbReference type="InParanoid" id="Q95N02"/>
<dbReference type="OrthoDB" id="9990906at2759"/>
<dbReference type="Proteomes" id="UP000008227">
    <property type="component" value="Unplaced"/>
</dbReference>
<dbReference type="Proteomes" id="UP000314985">
    <property type="component" value="Unplaced"/>
</dbReference>
<dbReference type="Proteomes" id="UP000694570">
    <property type="component" value="Unplaced"/>
</dbReference>
<dbReference type="Proteomes" id="UP000694571">
    <property type="component" value="Unplaced"/>
</dbReference>
<dbReference type="Proteomes" id="UP000694720">
    <property type="component" value="Unplaced"/>
</dbReference>
<dbReference type="Proteomes" id="UP000694722">
    <property type="component" value="Unplaced"/>
</dbReference>
<dbReference type="Proteomes" id="UP000694723">
    <property type="component" value="Unplaced"/>
</dbReference>
<dbReference type="Proteomes" id="UP000694724">
    <property type="component" value="Unplaced"/>
</dbReference>
<dbReference type="Proteomes" id="UP000694725">
    <property type="component" value="Unplaced"/>
</dbReference>
<dbReference type="Proteomes" id="UP000694726">
    <property type="component" value="Unplaced"/>
</dbReference>
<dbReference type="Proteomes" id="UP000694727">
    <property type="component" value="Unplaced"/>
</dbReference>
<dbReference type="Proteomes" id="UP000694728">
    <property type="component" value="Unplaced"/>
</dbReference>
<dbReference type="GO" id="GO:0005886">
    <property type="term" value="C:plasma membrane"/>
    <property type="evidence" value="ECO:0000318"/>
    <property type="project" value="GO_Central"/>
</dbReference>
<dbReference type="GO" id="GO:0004974">
    <property type="term" value="F:leukotriene receptor activity"/>
    <property type="evidence" value="ECO:0007669"/>
    <property type="project" value="InterPro"/>
</dbReference>
<dbReference type="GO" id="GO:0038023">
    <property type="term" value="F:signaling receptor activity"/>
    <property type="evidence" value="ECO:0000318"/>
    <property type="project" value="GO_Central"/>
</dbReference>
<dbReference type="GO" id="GO:0007186">
    <property type="term" value="P:G protein-coupled receptor signaling pathway"/>
    <property type="evidence" value="ECO:0000318"/>
    <property type="project" value="GO_Central"/>
</dbReference>
<dbReference type="FunFam" id="1.20.1070.10:FF:000017">
    <property type="entry name" value="lysophosphatidic acid receptor 4"/>
    <property type="match status" value="1"/>
</dbReference>
<dbReference type="Gene3D" id="1.20.1070.10">
    <property type="entry name" value="Rhodopsin 7-helix transmembrane proteins"/>
    <property type="match status" value="1"/>
</dbReference>
<dbReference type="InterPro" id="IPR013310">
    <property type="entry name" value="CLT1_recept"/>
</dbReference>
<dbReference type="InterPro" id="IPR004071">
    <property type="entry name" value="Cyst_leuk_rcpt"/>
</dbReference>
<dbReference type="InterPro" id="IPR000276">
    <property type="entry name" value="GPCR_Rhodpsn"/>
</dbReference>
<dbReference type="InterPro" id="IPR017452">
    <property type="entry name" value="GPCR_Rhodpsn_7TM"/>
</dbReference>
<dbReference type="PANTHER" id="PTHR24231:SF45">
    <property type="entry name" value="CYSTEINYL LEUKOTRIENE RECEPTOR 1"/>
    <property type="match status" value="1"/>
</dbReference>
<dbReference type="PANTHER" id="PTHR24231">
    <property type="entry name" value="PURINOCEPTOR-RELATED G-PROTEIN COUPLED RECEPTOR"/>
    <property type="match status" value="1"/>
</dbReference>
<dbReference type="Pfam" id="PF00001">
    <property type="entry name" value="7tm_1"/>
    <property type="match status" value="1"/>
</dbReference>
<dbReference type="PRINTS" id="PR01902">
    <property type="entry name" value="CYSLT1RECPTR"/>
</dbReference>
<dbReference type="PRINTS" id="PR01533">
    <property type="entry name" value="CYSLTRECPTR"/>
</dbReference>
<dbReference type="PRINTS" id="PR00237">
    <property type="entry name" value="GPCRRHODOPSN"/>
</dbReference>
<dbReference type="SUPFAM" id="SSF81321">
    <property type="entry name" value="Family A G protein-coupled receptor-like"/>
    <property type="match status" value="1"/>
</dbReference>
<dbReference type="PROSITE" id="PS50262">
    <property type="entry name" value="G_PROTEIN_RECEP_F1_2"/>
    <property type="match status" value="1"/>
</dbReference>
<organism>
    <name type="scientific">Sus scrofa</name>
    <name type="common">Pig</name>
    <dbReference type="NCBI Taxonomy" id="9823"/>
    <lineage>
        <taxon>Eukaryota</taxon>
        <taxon>Metazoa</taxon>
        <taxon>Chordata</taxon>
        <taxon>Craniata</taxon>
        <taxon>Vertebrata</taxon>
        <taxon>Euteleostomi</taxon>
        <taxon>Mammalia</taxon>
        <taxon>Eutheria</taxon>
        <taxon>Laurasiatheria</taxon>
        <taxon>Artiodactyla</taxon>
        <taxon>Suina</taxon>
        <taxon>Suidae</taxon>
        <taxon>Sus</taxon>
    </lineage>
</organism>
<evidence type="ECO:0000250" key="1"/>
<evidence type="ECO:0000255" key="2"/>
<evidence type="ECO:0000255" key="3">
    <source>
        <dbReference type="PROSITE-ProRule" id="PRU00521"/>
    </source>
</evidence>
<feature type="chain" id="PRO_0000069301" description="Cysteinyl leukotriene receptor 1">
    <location>
        <begin position="1"/>
        <end position="340"/>
    </location>
</feature>
<feature type="topological domain" description="Extracellular" evidence="2">
    <location>
        <begin position="1"/>
        <end position="31"/>
    </location>
</feature>
<feature type="transmembrane region" description="Helical; Name=1" evidence="2">
    <location>
        <begin position="32"/>
        <end position="52"/>
    </location>
</feature>
<feature type="topological domain" description="Cytoplasmic" evidence="2">
    <location>
        <begin position="53"/>
        <end position="60"/>
    </location>
</feature>
<feature type="transmembrane region" description="Helical; Name=2" evidence="2">
    <location>
        <begin position="61"/>
        <end position="81"/>
    </location>
</feature>
<feature type="topological domain" description="Extracellular" evidence="2">
    <location>
        <begin position="82"/>
        <end position="109"/>
    </location>
</feature>
<feature type="transmembrane region" description="Helical; Name=3" evidence="2">
    <location>
        <begin position="110"/>
        <end position="130"/>
    </location>
</feature>
<feature type="topological domain" description="Cytoplasmic" evidence="2">
    <location>
        <begin position="131"/>
        <end position="144"/>
    </location>
</feature>
<feature type="transmembrane region" description="Helical; Name=4" evidence="2">
    <location>
        <begin position="145"/>
        <end position="165"/>
    </location>
</feature>
<feature type="topological domain" description="Extracellular" evidence="2">
    <location>
        <begin position="166"/>
        <end position="196"/>
    </location>
</feature>
<feature type="transmembrane region" description="Helical; Name=5" evidence="2">
    <location>
        <begin position="197"/>
        <end position="217"/>
    </location>
</feature>
<feature type="topological domain" description="Cytoplasmic" evidence="2">
    <location>
        <begin position="218"/>
        <end position="233"/>
    </location>
</feature>
<feature type="transmembrane region" description="Helical; Name=6" evidence="2">
    <location>
        <begin position="234"/>
        <end position="254"/>
    </location>
</feature>
<feature type="topological domain" description="Extracellular" evidence="2">
    <location>
        <begin position="255"/>
        <end position="279"/>
    </location>
</feature>
<feature type="transmembrane region" description="Helical; Name=7" evidence="2">
    <location>
        <begin position="280"/>
        <end position="300"/>
    </location>
</feature>
<feature type="topological domain" description="Cytoplasmic" evidence="2">
    <location>
        <begin position="301"/>
        <end position="340"/>
    </location>
</feature>
<feature type="glycosylation site" description="N-linked (GlcNAc...) asparagine" evidence="2">
    <location>
        <position position="6"/>
    </location>
</feature>
<feature type="glycosylation site" description="N-linked (GlcNAc...) asparagine" evidence="2">
    <location>
        <position position="18"/>
    </location>
</feature>
<feature type="glycosylation site" description="N-linked (GlcNAc...) asparagine" evidence="2">
    <location>
        <position position="172"/>
    </location>
</feature>
<feature type="glycosylation site" description="N-linked (GlcNAc...) asparagine" evidence="2">
    <location>
        <position position="265"/>
    </location>
</feature>
<feature type="disulfide bond" evidence="3">
    <location>
        <begin position="99"/>
        <end position="176"/>
    </location>
</feature>
<accession>Q95N02</accession>
<gene>
    <name type="primary">CYSLTR1</name>
    <name type="synonym">CYSLT1</name>
</gene>
<sequence length="340" mass="38989">MDGVRNLTVSCASSNTCNDTIDDFRNQVYSTLYSMITVVGFFGNGFVLYVLIKTYHEKSAYQVYMINLAVADLLCVCTLPLRVVYYVHKGIWLFGDFLCRLSTYALYVNLYCSIFFMTAMSFFRCIAIVFPVQNINLITHKKAKIVCIAIWIFVILTSSPFLMSTSYKDEKNNTKCFEPPQXNQAKYHVLVLHYVSLFVGFIIPFVIIIVCYTMIILTLLKNSMKKNISSRKKAIGMIIVVTAAFLISFMPYHIQRTIHLHFLHNDTKHCDSVLRMQKSVXITLSLAASNCCFDPLLYFFSGGNFREGLSTFRKHSLSTMTYVPKKKTSLPEKAQEIYKE</sequence>
<protein>
    <recommendedName>
        <fullName>Cysteinyl leukotriene receptor 1</fullName>
        <shortName>CysLTR1</shortName>
    </recommendedName>
</protein>
<reference key="1">
    <citation type="submission" date="2000-12" db="EMBL/GenBank/DDBJ databases">
        <title>Characterization of cloned rat and porcine cysteinyl leukotriene receptors.</title>
        <authorList>
            <person name="Takasaki J."/>
            <person name="Kamohara M."/>
            <person name="Saito T."/>
            <person name="Matsumoto M."/>
            <person name="Matsumoto S."/>
            <person name="Ohishi T."/>
            <person name="Soga T."/>
            <person name="Matsushime H."/>
            <person name="Furuichi K."/>
        </authorList>
    </citation>
    <scope>NUCLEOTIDE SEQUENCE [MRNA]</scope>
</reference>